<sequence length="682" mass="77009">MCGIFAYMNYRVPKTRKEIFETLIRGLQRLEYRGYDSAGVAIDGNNHEVKERHIHLVKKRGKVKALDEELYKQDSMDLKVEFETHFGIAHTRWATHGVPNAVNSHPQRSDKDNEFVVIHNGIITNYKDLRKFLESKGYEFESETDTETIAKLIKYVFDNRETEDITFSTLVERVIQQLEGAFALVFKSIHYPGEAVATRRGSPLLIGVRSKYKLSTEQIPVLYPTCNIENVKNICKTRMKRLDSSTCLHAVGDKAVEFFFASDASAIIEHTNRVIFLEDDDIAAVADGKLSIHRVKRSATDDPSRAIQTLQMELQQIMKGNFSAFMQKEIFEQPESVFNTMRGRVNFETNTVLLGGLKDHLKEIRRCRRLIVIGCGTSYHAAVATRQVLEELTELPVMVELASDFLDRNTPVFRDDVCFFISQSGETADTLLALRYCKDRGALTVGITNTVGSSISRETDCGVHINAGPEIGVASTKAYTSQFISLVMFGLMMSEDRISLQNRRQEIIRGLRSLPELIKEVLSLDEKIHDLALELYTQRSLLVMGRGYNYATCLEGALKIKEITYMHSEGILAGELKHGPLALVDKQMPVIMVIMKDPCFAKCQNALQQVTARQGRPIILCSKDDTESSKFAYKTIELPHTVDCLQGILSVIPLQLLSFHLAVLRGYDVDFPRNLAKSVTVE</sequence>
<feature type="initiator methionine" description="Removed" evidence="1">
    <location>
        <position position="1"/>
    </location>
</feature>
<feature type="chain" id="PRO_0000135284" description="Glutamine--fructose-6-phosphate aminotransferase [isomerizing] 2">
    <location>
        <begin position="2"/>
        <end position="682"/>
    </location>
</feature>
<feature type="domain" description="Glutamine amidotransferase type-2" evidence="5">
    <location>
        <begin position="2"/>
        <end position="288"/>
    </location>
</feature>
<feature type="domain" description="SIS 1" evidence="6">
    <location>
        <begin position="360"/>
        <end position="499"/>
    </location>
</feature>
<feature type="domain" description="SIS 2" evidence="6">
    <location>
        <begin position="531"/>
        <end position="672"/>
    </location>
</feature>
<feature type="active site" description="For GATase activity" evidence="2">
    <location>
        <position position="2"/>
    </location>
</feature>
<feature type="binding site" evidence="4">
    <location>
        <begin position="377"/>
        <end position="378"/>
    </location>
    <ligand>
        <name>substrate</name>
    </ligand>
</feature>
<feature type="binding site" evidence="4">
    <location>
        <begin position="422"/>
        <end position="424"/>
    </location>
    <ligand>
        <name>substrate</name>
    </ligand>
</feature>
<feature type="binding site" evidence="4">
    <location>
        <position position="427"/>
    </location>
    <ligand>
        <name>substrate</name>
    </ligand>
</feature>
<feature type="binding site" evidence="4">
    <location>
        <position position="578"/>
    </location>
    <ligand>
        <name>substrate</name>
    </ligand>
</feature>
<feature type="modified residue" description="Phosphoserine" evidence="7">
    <location>
        <position position="244"/>
    </location>
</feature>
<protein>
    <recommendedName>
        <fullName>Glutamine--fructose-6-phosphate aminotransferase [isomerizing] 2</fullName>
        <ecNumber evidence="3">2.6.1.16</ecNumber>
    </recommendedName>
    <alternativeName>
        <fullName>D-fructose-6-phosphate amidotransferase 2</fullName>
    </alternativeName>
    <alternativeName>
        <fullName>Glutamine:fructose-6-phosphate amidotransferase 2</fullName>
        <shortName>GFAT 2</shortName>
        <shortName>GFAT2</shortName>
    </alternativeName>
    <alternativeName>
        <fullName>Hexosephosphate aminotransferase 2</fullName>
    </alternativeName>
</protein>
<accession>Q9Z2Z9</accession>
<accession>Q5NCL2</accession>
<proteinExistence type="evidence at protein level"/>
<name>GFPT2_MOUSE</name>
<comment type="function">
    <text>Controls the flux of glucose into the hexosamine pathway. Most likely involved in regulating the availability of precursors for N- and O-linked glycosylation of proteins.</text>
</comment>
<comment type="catalytic activity">
    <reaction evidence="3">
        <text>D-fructose 6-phosphate + L-glutamine = D-glucosamine 6-phosphate + L-glutamate</text>
        <dbReference type="Rhea" id="RHEA:13237"/>
        <dbReference type="ChEBI" id="CHEBI:29985"/>
        <dbReference type="ChEBI" id="CHEBI:58359"/>
        <dbReference type="ChEBI" id="CHEBI:58725"/>
        <dbReference type="ChEBI" id="CHEBI:61527"/>
        <dbReference type="EC" id="2.6.1.16"/>
    </reaction>
</comment>
<comment type="pathway">
    <text evidence="3">Nucleotide-sugar biosynthesis; UDP-N-acetyl-alpha-D-glucosamine biosynthesis; alpha-D-glucosamine 6-phosphate from D-fructose 6-phosphate: step 1/1.</text>
</comment>
<keyword id="KW-0032">Aminotransferase</keyword>
<keyword id="KW-0315">Glutamine amidotransferase</keyword>
<keyword id="KW-0597">Phosphoprotein</keyword>
<keyword id="KW-1185">Reference proteome</keyword>
<keyword id="KW-0677">Repeat</keyword>
<keyword id="KW-0808">Transferase</keyword>
<organism>
    <name type="scientific">Mus musculus</name>
    <name type="common">Mouse</name>
    <dbReference type="NCBI Taxonomy" id="10090"/>
    <lineage>
        <taxon>Eukaryota</taxon>
        <taxon>Metazoa</taxon>
        <taxon>Chordata</taxon>
        <taxon>Craniata</taxon>
        <taxon>Vertebrata</taxon>
        <taxon>Euteleostomi</taxon>
        <taxon>Mammalia</taxon>
        <taxon>Eutheria</taxon>
        <taxon>Euarchontoglires</taxon>
        <taxon>Glires</taxon>
        <taxon>Rodentia</taxon>
        <taxon>Myomorpha</taxon>
        <taxon>Muroidea</taxon>
        <taxon>Muridae</taxon>
        <taxon>Murinae</taxon>
        <taxon>Mus</taxon>
        <taxon>Mus</taxon>
    </lineage>
</organism>
<gene>
    <name type="primary">Gfpt2</name>
</gene>
<evidence type="ECO:0000250" key="1"/>
<evidence type="ECO:0000250" key="2">
    <source>
        <dbReference type="UniProtKB" id="P14742"/>
    </source>
</evidence>
<evidence type="ECO:0000250" key="3">
    <source>
        <dbReference type="UniProtKB" id="P82808"/>
    </source>
</evidence>
<evidence type="ECO:0000250" key="4">
    <source>
        <dbReference type="UniProtKB" id="Q06210"/>
    </source>
</evidence>
<evidence type="ECO:0000255" key="5">
    <source>
        <dbReference type="PROSITE-ProRule" id="PRU00609"/>
    </source>
</evidence>
<evidence type="ECO:0000255" key="6">
    <source>
        <dbReference type="PROSITE-ProRule" id="PRU00797"/>
    </source>
</evidence>
<evidence type="ECO:0007744" key="7">
    <source>
    </source>
</evidence>
<dbReference type="EC" id="2.6.1.16" evidence="3"/>
<dbReference type="EMBL" id="AB016778">
    <property type="protein sequence ID" value="BAA74727.1"/>
    <property type="molecule type" value="Genomic_DNA"/>
</dbReference>
<dbReference type="EMBL" id="AB016780">
    <property type="protein sequence ID" value="BAA74729.1"/>
    <property type="molecule type" value="mRNA"/>
</dbReference>
<dbReference type="EMBL" id="AL606479">
    <property type="status" value="NOT_ANNOTATED_CDS"/>
    <property type="molecule type" value="Genomic_DNA"/>
</dbReference>
<dbReference type="EMBL" id="BC031928">
    <property type="protein sequence ID" value="AAH31928.1"/>
    <property type="molecule type" value="mRNA"/>
</dbReference>
<dbReference type="CCDS" id="CCDS24622.1"/>
<dbReference type="RefSeq" id="NP_038557.1">
    <property type="nucleotide sequence ID" value="NM_013529.3"/>
</dbReference>
<dbReference type="SMR" id="Q9Z2Z9"/>
<dbReference type="BioGRID" id="199903">
    <property type="interactions" value="4"/>
</dbReference>
<dbReference type="FunCoup" id="Q9Z2Z9">
    <property type="interactions" value="185"/>
</dbReference>
<dbReference type="STRING" id="10090.ENSMUSP00000020629"/>
<dbReference type="MEROPS" id="C44.975"/>
<dbReference type="iPTMnet" id="Q9Z2Z9"/>
<dbReference type="PhosphoSitePlus" id="Q9Z2Z9"/>
<dbReference type="jPOST" id="Q9Z2Z9"/>
<dbReference type="PaxDb" id="10090-ENSMUSP00000020629"/>
<dbReference type="PeptideAtlas" id="Q9Z2Z9"/>
<dbReference type="ProteomicsDB" id="267430"/>
<dbReference type="Pumba" id="Q9Z2Z9"/>
<dbReference type="Antibodypedia" id="29588">
    <property type="antibodies" value="196 antibodies from 27 providers"/>
</dbReference>
<dbReference type="DNASU" id="14584"/>
<dbReference type="Ensembl" id="ENSMUST00000020629.5">
    <property type="protein sequence ID" value="ENSMUSP00000020629.5"/>
    <property type="gene ID" value="ENSMUSG00000020363.7"/>
</dbReference>
<dbReference type="GeneID" id="14584"/>
<dbReference type="KEGG" id="mmu:14584"/>
<dbReference type="UCSC" id="uc011xud.1">
    <property type="organism name" value="mouse"/>
</dbReference>
<dbReference type="AGR" id="MGI:1338883"/>
<dbReference type="CTD" id="9945"/>
<dbReference type="MGI" id="MGI:1338883">
    <property type="gene designation" value="Gfpt2"/>
</dbReference>
<dbReference type="VEuPathDB" id="HostDB:ENSMUSG00000020363"/>
<dbReference type="eggNOG" id="KOG1268">
    <property type="taxonomic scope" value="Eukaryota"/>
</dbReference>
<dbReference type="GeneTree" id="ENSGT00940000156413"/>
<dbReference type="HOGENOM" id="CLU_012520_5_2_1"/>
<dbReference type="InParanoid" id="Q9Z2Z9"/>
<dbReference type="OMA" id="GCTAKYW"/>
<dbReference type="OrthoDB" id="15235at2759"/>
<dbReference type="PhylomeDB" id="Q9Z2Z9"/>
<dbReference type="TreeFam" id="TF300864"/>
<dbReference type="Reactome" id="R-MMU-446210">
    <property type="pathway name" value="Synthesis of UDP-N-acetyl-glucosamine"/>
</dbReference>
<dbReference type="UniPathway" id="UPA00113">
    <property type="reaction ID" value="UER00528"/>
</dbReference>
<dbReference type="BioGRID-ORCS" id="14584">
    <property type="hits" value="2 hits in 77 CRISPR screens"/>
</dbReference>
<dbReference type="ChiTaRS" id="Gfpt2">
    <property type="organism name" value="mouse"/>
</dbReference>
<dbReference type="PRO" id="PR:Q9Z2Z9"/>
<dbReference type="Proteomes" id="UP000000589">
    <property type="component" value="Chromosome 11"/>
</dbReference>
<dbReference type="RNAct" id="Q9Z2Z9">
    <property type="molecule type" value="protein"/>
</dbReference>
<dbReference type="Bgee" id="ENSMUSG00000020363">
    <property type="expression patterns" value="Expressed in tarsal region and 236 other cell types or tissues"/>
</dbReference>
<dbReference type="GO" id="GO:0097367">
    <property type="term" value="F:carbohydrate derivative binding"/>
    <property type="evidence" value="ECO:0007669"/>
    <property type="project" value="InterPro"/>
</dbReference>
<dbReference type="GO" id="GO:0004360">
    <property type="term" value="F:glutamine-fructose-6-phosphate transaminase (isomerizing) activity"/>
    <property type="evidence" value="ECO:0000304"/>
    <property type="project" value="MGI"/>
</dbReference>
<dbReference type="GO" id="GO:1990830">
    <property type="term" value="P:cellular response to leukemia inhibitory factor"/>
    <property type="evidence" value="ECO:0000270"/>
    <property type="project" value="MGI"/>
</dbReference>
<dbReference type="GO" id="GO:0006002">
    <property type="term" value="P:fructose 6-phosphate metabolic process"/>
    <property type="evidence" value="ECO:0007669"/>
    <property type="project" value="Ensembl"/>
</dbReference>
<dbReference type="GO" id="GO:0006541">
    <property type="term" value="P:glutamine metabolic process"/>
    <property type="evidence" value="ECO:0000304"/>
    <property type="project" value="MGI"/>
</dbReference>
<dbReference type="GO" id="GO:0006048">
    <property type="term" value="P:UDP-N-acetylglucosamine biosynthetic process"/>
    <property type="evidence" value="ECO:0007669"/>
    <property type="project" value="UniProtKB-UniPathway"/>
</dbReference>
<dbReference type="CDD" id="cd00714">
    <property type="entry name" value="GFAT"/>
    <property type="match status" value="1"/>
</dbReference>
<dbReference type="CDD" id="cd05008">
    <property type="entry name" value="SIS_GlmS_GlmD_1"/>
    <property type="match status" value="1"/>
</dbReference>
<dbReference type="CDD" id="cd05009">
    <property type="entry name" value="SIS_GlmS_GlmD_2"/>
    <property type="match status" value="1"/>
</dbReference>
<dbReference type="FunFam" id="3.40.50.10490:FF:000001">
    <property type="entry name" value="Glutamine--fructose-6-phosphate aminotransferase [isomerizing]"/>
    <property type="match status" value="1"/>
</dbReference>
<dbReference type="FunFam" id="3.40.50.10490:FF:000126">
    <property type="entry name" value="Glutamine--fructose-6-phosphate aminotransferase [isomerizing] 1"/>
    <property type="match status" value="1"/>
</dbReference>
<dbReference type="Gene3D" id="3.40.50.10490">
    <property type="entry name" value="Glucose-6-phosphate isomerase like protein, domain 1"/>
    <property type="match status" value="2"/>
</dbReference>
<dbReference type="Gene3D" id="3.60.20.10">
    <property type="entry name" value="Glutamine Phosphoribosylpyrophosphate, subunit 1, domain 1"/>
    <property type="match status" value="1"/>
</dbReference>
<dbReference type="InterPro" id="IPR017932">
    <property type="entry name" value="GATase_2_dom"/>
</dbReference>
<dbReference type="InterPro" id="IPR005855">
    <property type="entry name" value="GFAT"/>
</dbReference>
<dbReference type="InterPro" id="IPR047084">
    <property type="entry name" value="GFAT_N"/>
</dbReference>
<dbReference type="InterPro" id="IPR035466">
    <property type="entry name" value="GlmS/AgaS_SIS"/>
</dbReference>
<dbReference type="InterPro" id="IPR035490">
    <property type="entry name" value="GlmS/FrlB_SIS"/>
</dbReference>
<dbReference type="InterPro" id="IPR029055">
    <property type="entry name" value="Ntn_hydrolases_N"/>
</dbReference>
<dbReference type="InterPro" id="IPR001347">
    <property type="entry name" value="SIS_dom"/>
</dbReference>
<dbReference type="InterPro" id="IPR046348">
    <property type="entry name" value="SIS_dom_sf"/>
</dbReference>
<dbReference type="NCBIfam" id="TIGR01135">
    <property type="entry name" value="glmS"/>
    <property type="match status" value="1"/>
</dbReference>
<dbReference type="NCBIfam" id="NF001484">
    <property type="entry name" value="PRK00331.1"/>
    <property type="match status" value="1"/>
</dbReference>
<dbReference type="PANTHER" id="PTHR10937">
    <property type="entry name" value="GLUCOSAMINE--FRUCTOSE-6-PHOSPHATE AMINOTRANSFERASE, ISOMERIZING"/>
    <property type="match status" value="1"/>
</dbReference>
<dbReference type="PANTHER" id="PTHR10937:SF10">
    <property type="entry name" value="GLUTAMINE--FRUCTOSE-6-PHOSPHATE AMINOTRANSFERASE [ISOMERIZING] 2"/>
    <property type="match status" value="1"/>
</dbReference>
<dbReference type="Pfam" id="PF13522">
    <property type="entry name" value="GATase_6"/>
    <property type="match status" value="1"/>
</dbReference>
<dbReference type="Pfam" id="PF01380">
    <property type="entry name" value="SIS"/>
    <property type="match status" value="2"/>
</dbReference>
<dbReference type="SUPFAM" id="SSF56235">
    <property type="entry name" value="N-terminal nucleophile aminohydrolases (Ntn hydrolases)"/>
    <property type="match status" value="1"/>
</dbReference>
<dbReference type="SUPFAM" id="SSF53697">
    <property type="entry name" value="SIS domain"/>
    <property type="match status" value="1"/>
</dbReference>
<dbReference type="PROSITE" id="PS51278">
    <property type="entry name" value="GATASE_TYPE_2"/>
    <property type="match status" value="1"/>
</dbReference>
<dbReference type="PROSITE" id="PS51464">
    <property type="entry name" value="SIS"/>
    <property type="match status" value="2"/>
</dbReference>
<reference key="1">
    <citation type="journal article" date="1999" name="Genomics">
        <title>cDNA cloning and mapping of a novel subtype of glutamine:fructose-6-phosphate amidotransferase (GFAT2) in human and mouse.</title>
        <authorList>
            <person name="Oki T."/>
            <person name="Yamazaki K."/>
            <person name="Kuromitsu J."/>
            <person name="Okada M."/>
            <person name="Tanaka I."/>
        </authorList>
    </citation>
    <scope>NUCLEOTIDE SEQUENCE [GENOMIC DNA / MRNA]</scope>
    <source>
        <strain>C57BL/6J</strain>
        <strain>Swiss Webster</strain>
    </source>
</reference>
<reference key="2">
    <citation type="journal article" date="2009" name="PLoS Biol.">
        <title>Lineage-specific biology revealed by a finished genome assembly of the mouse.</title>
        <authorList>
            <person name="Church D.M."/>
            <person name="Goodstadt L."/>
            <person name="Hillier L.W."/>
            <person name="Zody M.C."/>
            <person name="Goldstein S."/>
            <person name="She X."/>
            <person name="Bult C.J."/>
            <person name="Agarwala R."/>
            <person name="Cherry J.L."/>
            <person name="DiCuccio M."/>
            <person name="Hlavina W."/>
            <person name="Kapustin Y."/>
            <person name="Meric P."/>
            <person name="Maglott D."/>
            <person name="Birtle Z."/>
            <person name="Marques A.C."/>
            <person name="Graves T."/>
            <person name="Zhou S."/>
            <person name="Teague B."/>
            <person name="Potamousis K."/>
            <person name="Churas C."/>
            <person name="Place M."/>
            <person name="Herschleb J."/>
            <person name="Runnheim R."/>
            <person name="Forrest D."/>
            <person name="Amos-Landgraf J."/>
            <person name="Schwartz D.C."/>
            <person name="Cheng Z."/>
            <person name="Lindblad-Toh K."/>
            <person name="Eichler E.E."/>
            <person name="Ponting C.P."/>
        </authorList>
    </citation>
    <scope>NUCLEOTIDE SEQUENCE [LARGE SCALE GENOMIC DNA]</scope>
    <source>
        <strain>C57BL/6J</strain>
    </source>
</reference>
<reference key="3">
    <citation type="journal article" date="2004" name="Genome Res.">
        <title>The status, quality, and expansion of the NIH full-length cDNA project: the Mammalian Gene Collection (MGC).</title>
        <authorList>
            <consortium name="The MGC Project Team"/>
        </authorList>
    </citation>
    <scope>NUCLEOTIDE SEQUENCE [LARGE SCALE MRNA]</scope>
    <source>
        <strain>FVB/N</strain>
        <tissue>Salivary gland</tissue>
    </source>
</reference>
<reference key="4">
    <citation type="journal article" date="2010" name="Cell">
        <title>A tissue-specific atlas of mouse protein phosphorylation and expression.</title>
        <authorList>
            <person name="Huttlin E.L."/>
            <person name="Jedrychowski M.P."/>
            <person name="Elias J.E."/>
            <person name="Goswami T."/>
            <person name="Rad R."/>
            <person name="Beausoleil S.A."/>
            <person name="Villen J."/>
            <person name="Haas W."/>
            <person name="Sowa M.E."/>
            <person name="Gygi S.P."/>
        </authorList>
    </citation>
    <scope>PHOSPHORYLATION [LARGE SCALE ANALYSIS] AT SER-244</scope>
    <scope>IDENTIFICATION BY MASS SPECTROMETRY [LARGE SCALE ANALYSIS]</scope>
    <source>
        <tissue>Brown adipose tissue</tissue>
        <tissue>Heart</tissue>
        <tissue>Pancreas</tissue>
        <tissue>Testis</tissue>
    </source>
</reference>